<comment type="function">
    <text evidence="1">Protein S19 forms a complex with S13 that binds strongly to the 16S ribosomal RNA.</text>
</comment>
<comment type="similarity">
    <text evidence="1">Belongs to the universal ribosomal protein uS19 family.</text>
</comment>
<reference key="1">
    <citation type="journal article" date="2007" name="PLoS Genet.">
        <title>Patterns and implications of gene gain and loss in the evolution of Prochlorococcus.</title>
        <authorList>
            <person name="Kettler G.C."/>
            <person name="Martiny A.C."/>
            <person name="Huang K."/>
            <person name="Zucker J."/>
            <person name="Coleman M.L."/>
            <person name="Rodrigue S."/>
            <person name="Chen F."/>
            <person name="Lapidus A."/>
            <person name="Ferriera S."/>
            <person name="Johnson J."/>
            <person name="Steglich C."/>
            <person name="Church G.M."/>
            <person name="Richardson P."/>
            <person name="Chisholm S.W."/>
        </authorList>
    </citation>
    <scope>NUCLEOTIDE SEQUENCE [LARGE SCALE GENOMIC DNA]</scope>
    <source>
        <strain>MIT 9303</strain>
    </source>
</reference>
<gene>
    <name evidence="1" type="primary">rpsS</name>
    <name evidence="1" type="synonym">rps19</name>
    <name type="ordered locus">P9303_23061</name>
</gene>
<proteinExistence type="inferred from homology"/>
<feature type="chain" id="PRO_1000051099" description="Small ribosomal subunit protein uS19">
    <location>
        <begin position="1"/>
        <end position="91"/>
    </location>
</feature>
<keyword id="KW-0687">Ribonucleoprotein</keyword>
<keyword id="KW-0689">Ribosomal protein</keyword>
<keyword id="KW-0694">RNA-binding</keyword>
<keyword id="KW-0699">rRNA-binding</keyword>
<protein>
    <recommendedName>
        <fullName evidence="1">Small ribosomal subunit protein uS19</fullName>
    </recommendedName>
    <alternativeName>
        <fullName evidence="2">30S ribosomal protein S19</fullName>
    </alternativeName>
</protein>
<sequence>MGRSLKKGPFIADSLLRKLEKQNADDDKSVIKTWSRASTILPMMIGHTIAVHNGRSHVPVFITEQMVGHKLGEFAPTRTFKGHIKDKKGGR</sequence>
<dbReference type="EMBL" id="CP000554">
    <property type="protein sequence ID" value="ABM79041.1"/>
    <property type="molecule type" value="Genomic_DNA"/>
</dbReference>
<dbReference type="RefSeq" id="WP_011131103.1">
    <property type="nucleotide sequence ID" value="NC_008820.1"/>
</dbReference>
<dbReference type="SMR" id="A2CC31"/>
<dbReference type="STRING" id="59922.P9303_23061"/>
<dbReference type="KEGG" id="pmf:P9303_23061"/>
<dbReference type="HOGENOM" id="CLU_144911_0_1_3"/>
<dbReference type="BioCyc" id="PMAR59922:G1G80-2023-MONOMER"/>
<dbReference type="Proteomes" id="UP000002274">
    <property type="component" value="Chromosome"/>
</dbReference>
<dbReference type="GO" id="GO:0005737">
    <property type="term" value="C:cytoplasm"/>
    <property type="evidence" value="ECO:0007669"/>
    <property type="project" value="UniProtKB-ARBA"/>
</dbReference>
<dbReference type="GO" id="GO:0015935">
    <property type="term" value="C:small ribosomal subunit"/>
    <property type="evidence" value="ECO:0007669"/>
    <property type="project" value="InterPro"/>
</dbReference>
<dbReference type="GO" id="GO:0019843">
    <property type="term" value="F:rRNA binding"/>
    <property type="evidence" value="ECO:0007669"/>
    <property type="project" value="UniProtKB-UniRule"/>
</dbReference>
<dbReference type="GO" id="GO:0003735">
    <property type="term" value="F:structural constituent of ribosome"/>
    <property type="evidence" value="ECO:0007669"/>
    <property type="project" value="InterPro"/>
</dbReference>
<dbReference type="GO" id="GO:0000028">
    <property type="term" value="P:ribosomal small subunit assembly"/>
    <property type="evidence" value="ECO:0007669"/>
    <property type="project" value="TreeGrafter"/>
</dbReference>
<dbReference type="GO" id="GO:0006412">
    <property type="term" value="P:translation"/>
    <property type="evidence" value="ECO:0007669"/>
    <property type="project" value="UniProtKB-UniRule"/>
</dbReference>
<dbReference type="FunFam" id="3.30.860.10:FF:000001">
    <property type="entry name" value="30S ribosomal protein S19"/>
    <property type="match status" value="1"/>
</dbReference>
<dbReference type="Gene3D" id="3.30.860.10">
    <property type="entry name" value="30s Ribosomal Protein S19, Chain A"/>
    <property type="match status" value="1"/>
</dbReference>
<dbReference type="HAMAP" id="MF_00531">
    <property type="entry name" value="Ribosomal_uS19"/>
    <property type="match status" value="1"/>
</dbReference>
<dbReference type="InterPro" id="IPR002222">
    <property type="entry name" value="Ribosomal_uS19"/>
</dbReference>
<dbReference type="InterPro" id="IPR005732">
    <property type="entry name" value="Ribosomal_uS19_bac-type"/>
</dbReference>
<dbReference type="InterPro" id="IPR020934">
    <property type="entry name" value="Ribosomal_uS19_CS"/>
</dbReference>
<dbReference type="InterPro" id="IPR023575">
    <property type="entry name" value="Ribosomal_uS19_SF"/>
</dbReference>
<dbReference type="NCBIfam" id="TIGR01050">
    <property type="entry name" value="rpsS_bact"/>
    <property type="match status" value="1"/>
</dbReference>
<dbReference type="PANTHER" id="PTHR11880">
    <property type="entry name" value="RIBOSOMAL PROTEIN S19P FAMILY MEMBER"/>
    <property type="match status" value="1"/>
</dbReference>
<dbReference type="PANTHER" id="PTHR11880:SF8">
    <property type="entry name" value="SMALL RIBOSOMAL SUBUNIT PROTEIN US19M"/>
    <property type="match status" value="1"/>
</dbReference>
<dbReference type="Pfam" id="PF00203">
    <property type="entry name" value="Ribosomal_S19"/>
    <property type="match status" value="1"/>
</dbReference>
<dbReference type="PIRSF" id="PIRSF002144">
    <property type="entry name" value="Ribosomal_S19"/>
    <property type="match status" value="1"/>
</dbReference>
<dbReference type="PRINTS" id="PR00975">
    <property type="entry name" value="RIBOSOMALS19"/>
</dbReference>
<dbReference type="SUPFAM" id="SSF54570">
    <property type="entry name" value="Ribosomal protein S19"/>
    <property type="match status" value="1"/>
</dbReference>
<dbReference type="PROSITE" id="PS00323">
    <property type="entry name" value="RIBOSOMAL_S19"/>
    <property type="match status" value="1"/>
</dbReference>
<evidence type="ECO:0000255" key="1">
    <source>
        <dbReference type="HAMAP-Rule" id="MF_00531"/>
    </source>
</evidence>
<evidence type="ECO:0000305" key="2"/>
<organism>
    <name type="scientific">Prochlorococcus marinus (strain MIT 9303)</name>
    <dbReference type="NCBI Taxonomy" id="59922"/>
    <lineage>
        <taxon>Bacteria</taxon>
        <taxon>Bacillati</taxon>
        <taxon>Cyanobacteriota</taxon>
        <taxon>Cyanophyceae</taxon>
        <taxon>Synechococcales</taxon>
        <taxon>Prochlorococcaceae</taxon>
        <taxon>Prochlorococcus</taxon>
    </lineage>
</organism>
<accession>A2CC31</accession>
<name>RS19_PROM3</name>